<keyword id="KW-0687">Ribonucleoprotein</keyword>
<keyword id="KW-0689">Ribosomal protein</keyword>
<organism>
    <name type="scientific">Staphylococcus epidermidis (strain ATCC 12228 / FDA PCI 1200)</name>
    <dbReference type="NCBI Taxonomy" id="176280"/>
    <lineage>
        <taxon>Bacteria</taxon>
        <taxon>Bacillati</taxon>
        <taxon>Bacillota</taxon>
        <taxon>Bacilli</taxon>
        <taxon>Bacillales</taxon>
        <taxon>Staphylococcaceae</taxon>
        <taxon>Staphylococcus</taxon>
    </lineage>
</organism>
<evidence type="ECO:0000255" key="1">
    <source>
        <dbReference type="HAMAP-Rule" id="MF_00374"/>
    </source>
</evidence>
<evidence type="ECO:0000305" key="2"/>
<gene>
    <name evidence="1" type="primary">rpmC</name>
    <name type="ordered locus">SE_1816</name>
</gene>
<accession>P66175</accession>
<accession>Q99S29</accession>
<proteinExistence type="inferred from homology"/>
<sequence length="69" mass="8090">MKAKEIRDLTTSEIEEQIKSSKEELFNLRFQLATGQLEETARIRTVRKTIARLKTVAREREIEQSKANQ</sequence>
<protein>
    <recommendedName>
        <fullName evidence="1">Large ribosomal subunit protein uL29</fullName>
    </recommendedName>
    <alternativeName>
        <fullName evidence="2">50S ribosomal protein L29</fullName>
    </alternativeName>
</protein>
<dbReference type="EMBL" id="AE015929">
    <property type="protein sequence ID" value="AAO05457.1"/>
    <property type="molecule type" value="Genomic_DNA"/>
</dbReference>
<dbReference type="RefSeq" id="NP_765371.1">
    <property type="nucleotide sequence ID" value="NC_004461.1"/>
</dbReference>
<dbReference type="RefSeq" id="WP_000644737.1">
    <property type="nucleotide sequence ID" value="NZ_WBME01000007.1"/>
</dbReference>
<dbReference type="SMR" id="P66175"/>
<dbReference type="GeneID" id="98346554"/>
<dbReference type="KEGG" id="sep:SE_1816"/>
<dbReference type="PATRIC" id="fig|176280.10.peg.1772"/>
<dbReference type="eggNOG" id="COG0255">
    <property type="taxonomic scope" value="Bacteria"/>
</dbReference>
<dbReference type="HOGENOM" id="CLU_158491_5_2_9"/>
<dbReference type="OrthoDB" id="9815192at2"/>
<dbReference type="PRO" id="PR:P66175"/>
<dbReference type="Proteomes" id="UP000001411">
    <property type="component" value="Chromosome"/>
</dbReference>
<dbReference type="GO" id="GO:0022625">
    <property type="term" value="C:cytosolic large ribosomal subunit"/>
    <property type="evidence" value="ECO:0007669"/>
    <property type="project" value="TreeGrafter"/>
</dbReference>
<dbReference type="GO" id="GO:0003735">
    <property type="term" value="F:structural constituent of ribosome"/>
    <property type="evidence" value="ECO:0007669"/>
    <property type="project" value="InterPro"/>
</dbReference>
<dbReference type="GO" id="GO:0006412">
    <property type="term" value="P:translation"/>
    <property type="evidence" value="ECO:0007669"/>
    <property type="project" value="UniProtKB-UniRule"/>
</dbReference>
<dbReference type="CDD" id="cd00427">
    <property type="entry name" value="Ribosomal_L29_HIP"/>
    <property type="match status" value="1"/>
</dbReference>
<dbReference type="FunFam" id="1.10.287.310:FF:000001">
    <property type="entry name" value="50S ribosomal protein L29"/>
    <property type="match status" value="1"/>
</dbReference>
<dbReference type="Gene3D" id="1.10.287.310">
    <property type="match status" value="1"/>
</dbReference>
<dbReference type="HAMAP" id="MF_00374">
    <property type="entry name" value="Ribosomal_uL29"/>
    <property type="match status" value="1"/>
</dbReference>
<dbReference type="InterPro" id="IPR050063">
    <property type="entry name" value="Ribosomal_protein_uL29"/>
</dbReference>
<dbReference type="InterPro" id="IPR001854">
    <property type="entry name" value="Ribosomal_uL29"/>
</dbReference>
<dbReference type="InterPro" id="IPR036049">
    <property type="entry name" value="Ribosomal_uL29_sf"/>
</dbReference>
<dbReference type="NCBIfam" id="TIGR00012">
    <property type="entry name" value="L29"/>
    <property type="match status" value="1"/>
</dbReference>
<dbReference type="PANTHER" id="PTHR10916">
    <property type="entry name" value="60S RIBOSOMAL PROTEIN L35/50S RIBOSOMAL PROTEIN L29"/>
    <property type="match status" value="1"/>
</dbReference>
<dbReference type="PANTHER" id="PTHR10916:SF0">
    <property type="entry name" value="LARGE RIBOSOMAL SUBUNIT PROTEIN UL29C"/>
    <property type="match status" value="1"/>
</dbReference>
<dbReference type="Pfam" id="PF00831">
    <property type="entry name" value="Ribosomal_L29"/>
    <property type="match status" value="1"/>
</dbReference>
<dbReference type="SUPFAM" id="SSF46561">
    <property type="entry name" value="Ribosomal protein L29 (L29p)"/>
    <property type="match status" value="1"/>
</dbReference>
<feature type="chain" id="PRO_0000130461" description="Large ribosomal subunit protein uL29">
    <location>
        <begin position="1"/>
        <end position="69"/>
    </location>
</feature>
<comment type="similarity">
    <text evidence="1">Belongs to the universal ribosomal protein uL29 family.</text>
</comment>
<reference key="1">
    <citation type="journal article" date="2003" name="Mol. Microbiol.">
        <title>Genome-based analysis of virulence genes in a non-biofilm-forming Staphylococcus epidermidis strain (ATCC 12228).</title>
        <authorList>
            <person name="Zhang Y.-Q."/>
            <person name="Ren S.-X."/>
            <person name="Li H.-L."/>
            <person name="Wang Y.-X."/>
            <person name="Fu G."/>
            <person name="Yang J."/>
            <person name="Qin Z.-Q."/>
            <person name="Miao Y.-G."/>
            <person name="Wang W.-Y."/>
            <person name="Chen R.-S."/>
            <person name="Shen Y."/>
            <person name="Chen Z."/>
            <person name="Yuan Z.-H."/>
            <person name="Zhao G.-P."/>
            <person name="Qu D."/>
            <person name="Danchin A."/>
            <person name="Wen Y.-M."/>
        </authorList>
    </citation>
    <scope>NUCLEOTIDE SEQUENCE [LARGE SCALE GENOMIC DNA]</scope>
    <source>
        <strain>ATCC 12228 / FDA PCI 1200</strain>
    </source>
</reference>
<name>RL29_STAES</name>